<feature type="chain" id="PRO_0000140737" description="3-dehydroquinate synthase">
    <location>
        <begin position="1"/>
        <end position="362"/>
    </location>
</feature>
<feature type="binding site" evidence="1">
    <location>
        <begin position="71"/>
        <end position="76"/>
    </location>
    <ligand>
        <name>NAD(+)</name>
        <dbReference type="ChEBI" id="CHEBI:57540"/>
    </ligand>
</feature>
<feature type="binding site" evidence="1">
    <location>
        <begin position="105"/>
        <end position="109"/>
    </location>
    <ligand>
        <name>NAD(+)</name>
        <dbReference type="ChEBI" id="CHEBI:57540"/>
    </ligand>
</feature>
<feature type="binding site" evidence="1">
    <location>
        <begin position="129"/>
        <end position="130"/>
    </location>
    <ligand>
        <name>NAD(+)</name>
        <dbReference type="ChEBI" id="CHEBI:57540"/>
    </ligand>
</feature>
<feature type="binding site" evidence="1">
    <location>
        <position position="142"/>
    </location>
    <ligand>
        <name>NAD(+)</name>
        <dbReference type="ChEBI" id="CHEBI:57540"/>
    </ligand>
</feature>
<feature type="binding site" evidence="1">
    <location>
        <position position="151"/>
    </location>
    <ligand>
        <name>NAD(+)</name>
        <dbReference type="ChEBI" id="CHEBI:57540"/>
    </ligand>
</feature>
<feature type="binding site" evidence="1">
    <location>
        <begin position="169"/>
        <end position="172"/>
    </location>
    <ligand>
        <name>NAD(+)</name>
        <dbReference type="ChEBI" id="CHEBI:57540"/>
    </ligand>
</feature>
<feature type="binding site" evidence="1">
    <location>
        <position position="184"/>
    </location>
    <ligand>
        <name>Zn(2+)</name>
        <dbReference type="ChEBI" id="CHEBI:29105"/>
    </ligand>
</feature>
<feature type="binding site" evidence="1">
    <location>
        <position position="247"/>
    </location>
    <ligand>
        <name>Zn(2+)</name>
        <dbReference type="ChEBI" id="CHEBI:29105"/>
    </ligand>
</feature>
<feature type="binding site" evidence="1">
    <location>
        <position position="264"/>
    </location>
    <ligand>
        <name>Zn(2+)</name>
        <dbReference type="ChEBI" id="CHEBI:29105"/>
    </ligand>
</feature>
<sequence length="362" mass="38881">MERIVVTLGERSYPITIASGLFNEPASFLPLKSGEQVMLVTNETLAPLYLDKVRGVLEQAGVNVDSVILPDGEQYKSLAVLDTVFTALLQKPHGRDTTLVALGGGVVGDLTGFAAASYQRGVRFIQVPTTLLSQVDSSVGGKTAVNHPLGKNMIGAFYQPASVVVDLDCLKTLPPRELASGLAEVIKYGIILDGAFFNWLEENLDALLRLDGPAMAYCIRRCCELKAEVVAADERETGLRALLNLGHTFGHAIEAEMGYGNWLHGEAVAAGMVMAARTSERLGQFSSAETQRIITLLKRAGLPVNGPREMSAQAYLPHMLRDKKVLAGEMRLILPLAIGKSEVRSGVSHELVLNAIADCQSA</sequence>
<name>AROB_ECOLI</name>
<protein>
    <recommendedName>
        <fullName evidence="1 3">3-dehydroquinate synthase</fullName>
        <shortName evidence="1 3">DHQS</shortName>
        <ecNumber evidence="1 2">4.2.3.4</ecNumber>
    </recommendedName>
</protein>
<evidence type="ECO:0000255" key="1">
    <source>
        <dbReference type="HAMAP-Rule" id="MF_00110"/>
    </source>
</evidence>
<evidence type="ECO:0000269" key="2">
    <source>
    </source>
</evidence>
<evidence type="ECO:0000305" key="3"/>
<comment type="function">
    <text evidence="1 2">Catalyzes the conversion of 3-deoxy-D-arabino-heptulosonate 7-phosphate (DAHP) to dehydroquinate (DHQ).</text>
</comment>
<comment type="catalytic activity">
    <reaction evidence="1 2">
        <text>7-phospho-2-dehydro-3-deoxy-D-arabino-heptonate = 3-dehydroquinate + phosphate</text>
        <dbReference type="Rhea" id="RHEA:21968"/>
        <dbReference type="ChEBI" id="CHEBI:32364"/>
        <dbReference type="ChEBI" id="CHEBI:43474"/>
        <dbReference type="ChEBI" id="CHEBI:58394"/>
        <dbReference type="EC" id="4.2.3.4"/>
    </reaction>
</comment>
<comment type="cofactor">
    <cofactor evidence="1 2">
        <name>NAD(+)</name>
        <dbReference type="ChEBI" id="CHEBI:57540"/>
    </cofactor>
</comment>
<comment type="cofactor">
    <cofactor evidence="1 2">
        <name>Co(2+)</name>
        <dbReference type="ChEBI" id="CHEBI:48828"/>
    </cofactor>
    <cofactor evidence="1 2">
        <name>Zn(2+)</name>
        <dbReference type="ChEBI" id="CHEBI:29105"/>
    </cofactor>
    <text evidence="2">Binds 1 divalent metal cation per subunit. Displays higher activity with Co(2+), however, Zn(2+) may be the physiological metal cofactor.</text>
</comment>
<comment type="biophysicochemical properties">
    <kinetics>
        <KM evidence="2">0.6 uM for 3-deoxy-D-arabino-hept-2-ulosonate 7-phosphate (at pH 6.5)</KM>
        <KM evidence="2">5.5 uM for 3-deoxy-D-arabino-hept-2-ulosonate 7-phosphate (at pH 8.5)</KM>
    </kinetics>
</comment>
<comment type="pathway">
    <text evidence="1">Metabolic intermediate biosynthesis; chorismate biosynthesis; chorismate from D-erythrose 4-phosphate and phosphoenolpyruvate: step 2/7.</text>
</comment>
<comment type="subunit">
    <text evidence="2">Monomer.</text>
</comment>
<comment type="interaction">
    <interactant intactId="EBI-550843">
        <id>P07639</id>
    </interactant>
    <interactant intactId="EBI-1113234">
        <id>P68646</id>
        <label>fixX</label>
    </interactant>
    <organismsDiffer>false</organismsDiffer>
    <experiments>2</experiments>
</comment>
<comment type="subcellular location">
    <subcellularLocation>
        <location evidence="1">Cytoplasm</location>
    </subcellularLocation>
</comment>
<comment type="similarity">
    <text evidence="1 3">Belongs to the sugar phosphate cyclases superfamily. Dehydroquinate synthase family.</text>
</comment>
<gene>
    <name evidence="1" type="primary">aroB</name>
    <name type="ordered locus">b3389</name>
    <name type="ordered locus">JW3352</name>
</gene>
<accession>P07639</accession>
<accession>Q2M754</accession>
<reference key="1">
    <citation type="journal article" date="1986" name="FEBS Lett.">
        <title>The complete amino acid sequence of 3-dehydroquinate synthase of Escherichia coli K12.</title>
        <authorList>
            <person name="Millar G."/>
            <person name="Coggins J.R."/>
        </authorList>
    </citation>
    <scope>NUCLEOTIDE SEQUENCE [GENOMIC DNA]</scope>
    <source>
        <strain>K12</strain>
    </source>
</reference>
<reference key="2">
    <citation type="journal article" date="1995" name="Mol. Gen. Genet.">
        <title>Characterization of three genes in the dam-containing operon of Escherichia coli.</title>
        <authorList>
            <person name="Lyngstadaas A."/>
            <person name="Lobner-Olesen A."/>
            <person name="Boye E."/>
        </authorList>
    </citation>
    <scope>NUCLEOTIDE SEQUENCE [GENOMIC DNA]</scope>
</reference>
<reference key="3">
    <citation type="journal article" date="1997" name="Science">
        <title>The complete genome sequence of Escherichia coli K-12.</title>
        <authorList>
            <person name="Blattner F.R."/>
            <person name="Plunkett G. III"/>
            <person name="Bloch C.A."/>
            <person name="Perna N.T."/>
            <person name="Burland V."/>
            <person name="Riley M."/>
            <person name="Collado-Vides J."/>
            <person name="Glasner J.D."/>
            <person name="Rode C.K."/>
            <person name="Mayhew G.F."/>
            <person name="Gregor J."/>
            <person name="Davis N.W."/>
            <person name="Kirkpatrick H.A."/>
            <person name="Goeden M.A."/>
            <person name="Rose D.J."/>
            <person name="Mau B."/>
            <person name="Shao Y."/>
        </authorList>
    </citation>
    <scope>NUCLEOTIDE SEQUENCE [LARGE SCALE GENOMIC DNA]</scope>
    <source>
        <strain>K12 / MG1655 / ATCC 47076</strain>
    </source>
</reference>
<reference key="4">
    <citation type="journal article" date="2006" name="Mol. Syst. Biol.">
        <title>Highly accurate genome sequences of Escherichia coli K-12 strains MG1655 and W3110.</title>
        <authorList>
            <person name="Hayashi K."/>
            <person name="Morooka N."/>
            <person name="Yamamoto Y."/>
            <person name="Fujita K."/>
            <person name="Isono K."/>
            <person name="Choi S."/>
            <person name="Ohtsubo E."/>
            <person name="Baba T."/>
            <person name="Wanner B.L."/>
            <person name="Mori H."/>
            <person name="Horiuchi T."/>
        </authorList>
    </citation>
    <scope>NUCLEOTIDE SEQUENCE [LARGE SCALE GENOMIC DNA]</scope>
    <source>
        <strain>K12 / W3110 / ATCC 27325 / DSM 5911</strain>
    </source>
</reference>
<reference key="5">
    <citation type="journal article" date="1989" name="Mol. Gen. Genet.">
        <title>The Escherichia coli dam gene is expressed as a distal gene of a new operon.</title>
        <authorList>
            <person name="Jonczyk P."/>
            <person name="Hines R."/>
            <person name="Smith D.W."/>
        </authorList>
    </citation>
    <scope>NUCLEOTIDE SEQUENCE [GENOMIC DNA] OF 357-362</scope>
    <source>
        <strain>K12</strain>
    </source>
</reference>
<reference key="6">
    <citation type="journal article" date="1989" name="Biochemistry">
        <title>Dehydroquinate synthase: the role of divalent metal cations and of nicotinamide adenine dinucleotide in catalysis.</title>
        <authorList>
            <person name="Bender S.L."/>
            <person name="Mehdi S."/>
            <person name="Knowles J.R."/>
        </authorList>
    </citation>
    <scope>FUNCTION</scope>
    <scope>CATALYTIC ACTIVITY</scope>
    <scope>COFACTOR</scope>
    <scope>KINETIC PARAMETERS</scope>
    <scope>SUBUNIT</scope>
</reference>
<dbReference type="EC" id="4.2.3.4" evidence="1 2"/>
<dbReference type="EMBL" id="X03867">
    <property type="protein sequence ID" value="CAA27495.1"/>
    <property type="molecule type" value="Genomic_DNA"/>
</dbReference>
<dbReference type="EMBL" id="Z19601">
    <property type="protein sequence ID" value="CAA79666.1"/>
    <property type="molecule type" value="Genomic_DNA"/>
</dbReference>
<dbReference type="EMBL" id="U18997">
    <property type="protein sequence ID" value="AAA58186.1"/>
    <property type="molecule type" value="Genomic_DNA"/>
</dbReference>
<dbReference type="EMBL" id="U00096">
    <property type="protein sequence ID" value="AAC76414.1"/>
    <property type="molecule type" value="Genomic_DNA"/>
</dbReference>
<dbReference type="EMBL" id="AP009048">
    <property type="protein sequence ID" value="BAE77902.1"/>
    <property type="molecule type" value="Genomic_DNA"/>
</dbReference>
<dbReference type="EMBL" id="X15162">
    <property type="protein sequence ID" value="CAA33252.1"/>
    <property type="molecule type" value="Genomic_DNA"/>
</dbReference>
<dbReference type="PIR" id="A24863">
    <property type="entry name" value="SYECQ"/>
</dbReference>
<dbReference type="RefSeq" id="NP_417848.1">
    <property type="nucleotide sequence ID" value="NC_000913.3"/>
</dbReference>
<dbReference type="RefSeq" id="WP_000439848.1">
    <property type="nucleotide sequence ID" value="NZ_SSZK01000008.1"/>
</dbReference>
<dbReference type="SMR" id="P07639"/>
<dbReference type="BioGRID" id="4259296">
    <property type="interactions" value="59"/>
</dbReference>
<dbReference type="BioGRID" id="852236">
    <property type="interactions" value="5"/>
</dbReference>
<dbReference type="DIP" id="DIP-9150N"/>
<dbReference type="FunCoup" id="P07639">
    <property type="interactions" value="738"/>
</dbReference>
<dbReference type="IntAct" id="P07639">
    <property type="interactions" value="9"/>
</dbReference>
<dbReference type="STRING" id="511145.b3389"/>
<dbReference type="BindingDB" id="P07639"/>
<dbReference type="ChEMBL" id="CHEMBL3554"/>
<dbReference type="jPOST" id="P07639"/>
<dbReference type="PaxDb" id="511145-b3389"/>
<dbReference type="EnsemblBacteria" id="AAC76414">
    <property type="protein sequence ID" value="AAC76414"/>
    <property type="gene ID" value="b3389"/>
</dbReference>
<dbReference type="GeneID" id="947927"/>
<dbReference type="KEGG" id="ecj:JW3352"/>
<dbReference type="KEGG" id="eco:b3389"/>
<dbReference type="KEGG" id="ecoc:C3026_18390"/>
<dbReference type="PATRIC" id="fig|1411691.4.peg.3341"/>
<dbReference type="EchoBASE" id="EB0072"/>
<dbReference type="eggNOG" id="COG0337">
    <property type="taxonomic scope" value="Bacteria"/>
</dbReference>
<dbReference type="HOGENOM" id="CLU_001201_0_2_6"/>
<dbReference type="InParanoid" id="P07639"/>
<dbReference type="OMA" id="IAIGMRM"/>
<dbReference type="OrthoDB" id="9806583at2"/>
<dbReference type="PhylomeDB" id="P07639"/>
<dbReference type="BioCyc" id="EcoCyc:AROB-MONOMER"/>
<dbReference type="BioCyc" id="MetaCyc:AROB-MONOMER"/>
<dbReference type="BRENDA" id="4.2.3.4">
    <property type="organism ID" value="2026"/>
</dbReference>
<dbReference type="SABIO-RK" id="P07639"/>
<dbReference type="UniPathway" id="UPA00053">
    <property type="reaction ID" value="UER00085"/>
</dbReference>
<dbReference type="PRO" id="PR:P07639"/>
<dbReference type="Proteomes" id="UP000000625">
    <property type="component" value="Chromosome"/>
</dbReference>
<dbReference type="GO" id="GO:0005737">
    <property type="term" value="C:cytoplasm"/>
    <property type="evidence" value="ECO:0000314"/>
    <property type="project" value="EcoliWiki"/>
</dbReference>
<dbReference type="GO" id="GO:0003856">
    <property type="term" value="F:3-dehydroquinate synthase activity"/>
    <property type="evidence" value="ECO:0000314"/>
    <property type="project" value="EcoCyc"/>
</dbReference>
<dbReference type="GO" id="GO:0070403">
    <property type="term" value="F:NAD+ binding"/>
    <property type="evidence" value="ECO:0000314"/>
    <property type="project" value="EcoCyc"/>
</dbReference>
<dbReference type="GO" id="GO:0008270">
    <property type="term" value="F:zinc ion binding"/>
    <property type="evidence" value="ECO:0000314"/>
    <property type="project" value="EcoCyc"/>
</dbReference>
<dbReference type="GO" id="GO:0008652">
    <property type="term" value="P:amino acid biosynthetic process"/>
    <property type="evidence" value="ECO:0007669"/>
    <property type="project" value="UniProtKB-KW"/>
</dbReference>
<dbReference type="GO" id="GO:0009073">
    <property type="term" value="P:aromatic amino acid family biosynthetic process"/>
    <property type="evidence" value="ECO:0000318"/>
    <property type="project" value="GO_Central"/>
</dbReference>
<dbReference type="GO" id="GO:0009423">
    <property type="term" value="P:chorismate biosynthetic process"/>
    <property type="evidence" value="ECO:0007669"/>
    <property type="project" value="UniProtKB-UniRule"/>
</dbReference>
<dbReference type="CDD" id="cd08195">
    <property type="entry name" value="DHQS"/>
    <property type="match status" value="1"/>
</dbReference>
<dbReference type="FunFam" id="1.20.1090.10:FF:000002">
    <property type="entry name" value="3-dehydroquinate synthase"/>
    <property type="match status" value="1"/>
</dbReference>
<dbReference type="FunFam" id="3.40.50.1970:FF:000001">
    <property type="entry name" value="3-dehydroquinate synthase"/>
    <property type="match status" value="1"/>
</dbReference>
<dbReference type="Gene3D" id="3.40.50.1970">
    <property type="match status" value="1"/>
</dbReference>
<dbReference type="Gene3D" id="1.20.1090.10">
    <property type="entry name" value="Dehydroquinate synthase-like - alpha domain"/>
    <property type="match status" value="1"/>
</dbReference>
<dbReference type="HAMAP" id="MF_00110">
    <property type="entry name" value="DHQ_synthase"/>
    <property type="match status" value="1"/>
</dbReference>
<dbReference type="InterPro" id="IPR050071">
    <property type="entry name" value="Dehydroquinate_synthase"/>
</dbReference>
<dbReference type="InterPro" id="IPR016037">
    <property type="entry name" value="DHQ_synth_AroB"/>
</dbReference>
<dbReference type="InterPro" id="IPR030963">
    <property type="entry name" value="DHQ_synth_fam"/>
</dbReference>
<dbReference type="InterPro" id="IPR030960">
    <property type="entry name" value="DHQS/DOIS_N"/>
</dbReference>
<dbReference type="InterPro" id="IPR056179">
    <property type="entry name" value="DHQS_C"/>
</dbReference>
<dbReference type="NCBIfam" id="TIGR01357">
    <property type="entry name" value="aroB"/>
    <property type="match status" value="1"/>
</dbReference>
<dbReference type="PANTHER" id="PTHR43622">
    <property type="entry name" value="3-DEHYDROQUINATE SYNTHASE"/>
    <property type="match status" value="1"/>
</dbReference>
<dbReference type="PANTHER" id="PTHR43622:SF7">
    <property type="entry name" value="3-DEHYDROQUINATE SYNTHASE, CHLOROPLASTIC"/>
    <property type="match status" value="1"/>
</dbReference>
<dbReference type="Pfam" id="PF01761">
    <property type="entry name" value="DHQ_synthase"/>
    <property type="match status" value="1"/>
</dbReference>
<dbReference type="Pfam" id="PF24621">
    <property type="entry name" value="DHQS_C"/>
    <property type="match status" value="1"/>
</dbReference>
<dbReference type="PIRSF" id="PIRSF001455">
    <property type="entry name" value="DHQ_synth"/>
    <property type="match status" value="1"/>
</dbReference>
<dbReference type="SUPFAM" id="SSF56796">
    <property type="entry name" value="Dehydroquinate synthase-like"/>
    <property type="match status" value="1"/>
</dbReference>
<organism>
    <name type="scientific">Escherichia coli (strain K12)</name>
    <dbReference type="NCBI Taxonomy" id="83333"/>
    <lineage>
        <taxon>Bacteria</taxon>
        <taxon>Pseudomonadati</taxon>
        <taxon>Pseudomonadota</taxon>
        <taxon>Gammaproteobacteria</taxon>
        <taxon>Enterobacterales</taxon>
        <taxon>Enterobacteriaceae</taxon>
        <taxon>Escherichia</taxon>
    </lineage>
</organism>
<proteinExistence type="evidence at protein level"/>
<keyword id="KW-0028">Amino-acid biosynthesis</keyword>
<keyword id="KW-0057">Aromatic amino acid biosynthesis</keyword>
<keyword id="KW-0170">Cobalt</keyword>
<keyword id="KW-0963">Cytoplasm</keyword>
<keyword id="KW-0456">Lyase</keyword>
<keyword id="KW-0479">Metal-binding</keyword>
<keyword id="KW-0520">NAD</keyword>
<keyword id="KW-0547">Nucleotide-binding</keyword>
<keyword id="KW-1185">Reference proteome</keyword>
<keyword id="KW-0862">Zinc</keyword>